<protein>
    <recommendedName>
        <fullName>Basic phospholipase A2 VRV-PL-V</fullName>
        <shortName>svPLA2</shortName>
        <ecNumber>3.1.1.4</ecNumber>
    </recommendedName>
    <alternativeName>
        <fullName>P2-1</fullName>
    </alternativeName>
    <alternativeName>
        <fullName>P2-2</fullName>
    </alternativeName>
    <alternativeName>
        <fullName>P3</fullName>
    </alternativeName>
    <alternativeName>
        <fullName>Phosphatidylcholine 2-acylhydrolase</fullName>
    </alternativeName>
</protein>
<reference evidence="7" key="1">
    <citation type="thesis" date="2004" institute="University of Mysore" country="India">
        <title>Mechanism of action of snake venom toxic phospholipases.</title>
        <authorList>
            <person name="Srinivasan S."/>
        </authorList>
    </citation>
    <scope>PROTEIN SEQUENCE</scope>
    <scope>FUNCTION</scope>
    <scope>CATALYTIC ACTIVITY</scope>
    <scope>COFACTOR</scope>
    <scope>SUBCELLULAR LOCATION</scope>
    <scope>TISSUE SPECIFICITY</scope>
    <source>
        <tissue evidence="6">Venom</tissue>
    </source>
</reference>
<reference key="2">
    <citation type="journal article" date="1996" name="Toxicon">
        <title>Two types of Russell's viper revealed by variation in phospholipases A2 from venom of the subspecies.</title>
        <authorList>
            <person name="Tsai I.-H."/>
            <person name="Lu P.-J."/>
            <person name="Su J.-C."/>
        </authorList>
    </citation>
    <scope>PROTEIN SEQUENCE OF 1-50</scope>
    <scope>FUNCTION</scope>
    <scope>TOXIC DOSE</scope>
    <source>
        <tissue>Venom</tissue>
    </source>
</reference>
<comment type="function">
    <text evidence="5 6">Snake venom phospholipase A2 (PLA2) that has a low enzymatic activity. PLA2 catalyzes the calcium-dependent hydrolysis of the 2-acyl groups in 3-sn-phosphoglycerides.</text>
</comment>
<comment type="catalytic activity">
    <reaction evidence="3 4 6">
        <text>a 1,2-diacyl-sn-glycero-3-phosphocholine + H2O = a 1-acyl-sn-glycero-3-phosphocholine + a fatty acid + H(+)</text>
        <dbReference type="Rhea" id="RHEA:15801"/>
        <dbReference type="ChEBI" id="CHEBI:15377"/>
        <dbReference type="ChEBI" id="CHEBI:15378"/>
        <dbReference type="ChEBI" id="CHEBI:28868"/>
        <dbReference type="ChEBI" id="CHEBI:57643"/>
        <dbReference type="ChEBI" id="CHEBI:58168"/>
        <dbReference type="EC" id="3.1.1.4"/>
    </reaction>
</comment>
<comment type="cofactor">
    <cofactor evidence="6">
        <name>Ca(2+)</name>
        <dbReference type="ChEBI" id="CHEBI:29108"/>
    </cofactor>
    <text evidence="6">Binds 1 Ca(2+) ion.</text>
</comment>
<comment type="subunit">
    <text evidence="2">Monomer.</text>
</comment>
<comment type="subcellular location">
    <subcellularLocation>
        <location evidence="6">Secreted</location>
    </subcellularLocation>
</comment>
<comment type="tissue specificity">
    <text evidence="6">Expressed by the venom gland.</text>
</comment>
<comment type="toxic dose">
    <text evidence="5">LD(50) is &gt;2 mg/kg by intraperitoneal injection into mice.</text>
</comment>
<comment type="similarity">
    <text evidence="7">Belongs to the phospholipase A2 family. Group II subfamily. D49 sub-subfamily.</text>
</comment>
<dbReference type="EC" id="3.1.1.4"/>
<dbReference type="SMR" id="P84674"/>
<dbReference type="GO" id="GO:0005576">
    <property type="term" value="C:extracellular region"/>
    <property type="evidence" value="ECO:0007669"/>
    <property type="project" value="UniProtKB-SubCell"/>
</dbReference>
<dbReference type="GO" id="GO:0005509">
    <property type="term" value="F:calcium ion binding"/>
    <property type="evidence" value="ECO:0007669"/>
    <property type="project" value="InterPro"/>
</dbReference>
<dbReference type="GO" id="GO:0047498">
    <property type="term" value="F:calcium-dependent phospholipase A2 activity"/>
    <property type="evidence" value="ECO:0007669"/>
    <property type="project" value="TreeGrafter"/>
</dbReference>
<dbReference type="GO" id="GO:0005543">
    <property type="term" value="F:phospholipid binding"/>
    <property type="evidence" value="ECO:0007669"/>
    <property type="project" value="TreeGrafter"/>
</dbReference>
<dbReference type="GO" id="GO:0090729">
    <property type="term" value="F:toxin activity"/>
    <property type="evidence" value="ECO:0007669"/>
    <property type="project" value="UniProtKB-KW"/>
</dbReference>
<dbReference type="GO" id="GO:0050482">
    <property type="term" value="P:arachidonate secretion"/>
    <property type="evidence" value="ECO:0007669"/>
    <property type="project" value="InterPro"/>
</dbReference>
<dbReference type="GO" id="GO:0016042">
    <property type="term" value="P:lipid catabolic process"/>
    <property type="evidence" value="ECO:0007669"/>
    <property type="project" value="UniProtKB-KW"/>
</dbReference>
<dbReference type="GO" id="GO:0042130">
    <property type="term" value="P:negative regulation of T cell proliferation"/>
    <property type="evidence" value="ECO:0007669"/>
    <property type="project" value="TreeGrafter"/>
</dbReference>
<dbReference type="GO" id="GO:0006644">
    <property type="term" value="P:phospholipid metabolic process"/>
    <property type="evidence" value="ECO:0007669"/>
    <property type="project" value="InterPro"/>
</dbReference>
<dbReference type="CDD" id="cd00125">
    <property type="entry name" value="PLA2c"/>
    <property type="match status" value="1"/>
</dbReference>
<dbReference type="FunFam" id="1.20.90.10:FF:000001">
    <property type="entry name" value="Basic phospholipase A2 homolog"/>
    <property type="match status" value="1"/>
</dbReference>
<dbReference type="Gene3D" id="1.20.90.10">
    <property type="entry name" value="Phospholipase A2 domain"/>
    <property type="match status" value="1"/>
</dbReference>
<dbReference type="InterPro" id="IPR001211">
    <property type="entry name" value="PLipase_A2"/>
</dbReference>
<dbReference type="InterPro" id="IPR033112">
    <property type="entry name" value="PLipase_A2_Asp_AS"/>
</dbReference>
<dbReference type="InterPro" id="IPR016090">
    <property type="entry name" value="PLipase_A2_dom"/>
</dbReference>
<dbReference type="InterPro" id="IPR036444">
    <property type="entry name" value="PLipase_A2_dom_sf"/>
</dbReference>
<dbReference type="InterPro" id="IPR033113">
    <property type="entry name" value="PLipase_A2_His_AS"/>
</dbReference>
<dbReference type="PANTHER" id="PTHR11716">
    <property type="entry name" value="PHOSPHOLIPASE A2 FAMILY MEMBER"/>
    <property type="match status" value="1"/>
</dbReference>
<dbReference type="PANTHER" id="PTHR11716:SF9">
    <property type="entry name" value="PHOSPHOLIPASE A2, MEMBRANE ASSOCIATED"/>
    <property type="match status" value="1"/>
</dbReference>
<dbReference type="Pfam" id="PF00068">
    <property type="entry name" value="Phospholip_A2_1"/>
    <property type="match status" value="1"/>
</dbReference>
<dbReference type="PRINTS" id="PR00389">
    <property type="entry name" value="PHPHLIPASEA2"/>
</dbReference>
<dbReference type="SMART" id="SM00085">
    <property type="entry name" value="PA2c"/>
    <property type="match status" value="1"/>
</dbReference>
<dbReference type="SUPFAM" id="SSF48619">
    <property type="entry name" value="Phospholipase A2, PLA2"/>
    <property type="match status" value="1"/>
</dbReference>
<dbReference type="PROSITE" id="PS00119">
    <property type="entry name" value="PA2_ASP"/>
    <property type="match status" value="1"/>
</dbReference>
<dbReference type="PROSITE" id="PS00118">
    <property type="entry name" value="PA2_HIS"/>
    <property type="match status" value="1"/>
</dbReference>
<keyword id="KW-0106">Calcium</keyword>
<keyword id="KW-0903">Direct protein sequencing</keyword>
<keyword id="KW-1015">Disulfide bond</keyword>
<keyword id="KW-0378">Hydrolase</keyword>
<keyword id="KW-0442">Lipid degradation</keyword>
<keyword id="KW-0443">Lipid metabolism</keyword>
<keyword id="KW-0479">Metal-binding</keyword>
<keyword id="KW-0964">Secreted</keyword>
<keyword id="KW-0800">Toxin</keyword>
<name>PA2B5_DABRR</name>
<evidence type="ECO:0000250" key="1">
    <source>
        <dbReference type="UniProtKB" id="P14418"/>
    </source>
</evidence>
<evidence type="ECO:0000250" key="2">
    <source>
        <dbReference type="UniProtKB" id="P59071"/>
    </source>
</evidence>
<evidence type="ECO:0000255" key="3">
    <source>
        <dbReference type="PROSITE-ProRule" id="PRU10035"/>
    </source>
</evidence>
<evidence type="ECO:0000255" key="4">
    <source>
        <dbReference type="PROSITE-ProRule" id="PRU10036"/>
    </source>
</evidence>
<evidence type="ECO:0000269" key="5">
    <source>
    </source>
</evidence>
<evidence type="ECO:0000269" key="6">
    <source ref="1"/>
</evidence>
<evidence type="ECO:0000305" key="7"/>
<organism>
    <name type="scientific">Daboia russelii</name>
    <name type="common">Russel's viper</name>
    <name type="synonym">Vipera russelii</name>
    <dbReference type="NCBI Taxonomy" id="8707"/>
    <lineage>
        <taxon>Eukaryota</taxon>
        <taxon>Metazoa</taxon>
        <taxon>Chordata</taxon>
        <taxon>Craniata</taxon>
        <taxon>Vertebrata</taxon>
        <taxon>Euteleostomi</taxon>
        <taxon>Lepidosauria</taxon>
        <taxon>Squamata</taxon>
        <taxon>Bifurcata</taxon>
        <taxon>Unidentata</taxon>
        <taxon>Episquamata</taxon>
        <taxon>Toxicofera</taxon>
        <taxon>Serpentes</taxon>
        <taxon>Colubroidea</taxon>
        <taxon>Viperidae</taxon>
        <taxon>Viperinae</taxon>
        <taxon>Daboia</taxon>
    </lineage>
</organism>
<sequence length="121" mass="13587">SLLEFGMMILEETGKLAVPFYSSYGCYCGWGGKGTPKDATDRCCFVHDCCYGNLPDCTPKPDRYKYKRVNGAIVCEQGTSCENRICECDKAAAICFTKNLNTYSKIYMLYPDFLCKGELKC</sequence>
<accession>P84674</accession>
<feature type="chain" id="PRO_0000161715" description="Basic phospholipase A2 VRV-PL-V" evidence="6">
    <location>
        <begin position="1"/>
        <end position="121"/>
    </location>
</feature>
<feature type="active site" evidence="1">
    <location>
        <position position="47"/>
    </location>
</feature>
<feature type="active site" evidence="1">
    <location>
        <position position="89"/>
    </location>
</feature>
<feature type="binding site" evidence="2">
    <location>
        <position position="27"/>
    </location>
    <ligand>
        <name>Ca(2+)</name>
        <dbReference type="ChEBI" id="CHEBI:29108"/>
    </ligand>
</feature>
<feature type="binding site" evidence="2">
    <location>
        <position position="29"/>
    </location>
    <ligand>
        <name>Ca(2+)</name>
        <dbReference type="ChEBI" id="CHEBI:29108"/>
    </ligand>
</feature>
<feature type="binding site" evidence="2">
    <location>
        <position position="31"/>
    </location>
    <ligand>
        <name>Ca(2+)</name>
        <dbReference type="ChEBI" id="CHEBI:29108"/>
    </ligand>
</feature>
<feature type="binding site" evidence="2">
    <location>
        <position position="48"/>
    </location>
    <ligand>
        <name>Ca(2+)</name>
        <dbReference type="ChEBI" id="CHEBI:29108"/>
    </ligand>
</feature>
<feature type="disulfide bond" evidence="2">
    <location>
        <begin position="26"/>
        <end position="115"/>
    </location>
</feature>
<feature type="disulfide bond" evidence="2">
    <location>
        <begin position="28"/>
        <end position="44"/>
    </location>
</feature>
<feature type="disulfide bond" evidence="2">
    <location>
        <begin position="43"/>
        <end position="95"/>
    </location>
</feature>
<feature type="disulfide bond" evidence="2">
    <location>
        <begin position="49"/>
        <end position="121"/>
    </location>
</feature>
<feature type="disulfide bond" evidence="2">
    <location>
        <begin position="50"/>
        <end position="88"/>
    </location>
</feature>
<feature type="disulfide bond" evidence="2">
    <location>
        <begin position="57"/>
        <end position="81"/>
    </location>
</feature>
<feature type="disulfide bond" evidence="2">
    <location>
        <begin position="75"/>
        <end position="86"/>
    </location>
</feature>
<feature type="sequence variant" description="In P2-2.">
    <original>M</original>
    <variation>K</variation>
    <location>
        <position position="7"/>
    </location>
</feature>
<feature type="sequence variant" description="In P3.">
    <original>S</original>
    <variation>D</variation>
    <location>
        <position position="23"/>
    </location>
</feature>
<proteinExistence type="evidence at protein level"/>